<comment type="function">
    <text evidence="1">Catalyzes the attachment of glutamate to tRNA(Glu) in a two-step reaction: glutamate is first activated by ATP to form Glu-AMP and then transferred to the acceptor end of tRNA(Glu).</text>
</comment>
<comment type="catalytic activity">
    <reaction evidence="1">
        <text>tRNA(Glu) + L-glutamate + ATP = L-glutamyl-tRNA(Glu) + AMP + diphosphate</text>
        <dbReference type="Rhea" id="RHEA:23540"/>
        <dbReference type="Rhea" id="RHEA-COMP:9663"/>
        <dbReference type="Rhea" id="RHEA-COMP:9680"/>
        <dbReference type="ChEBI" id="CHEBI:29985"/>
        <dbReference type="ChEBI" id="CHEBI:30616"/>
        <dbReference type="ChEBI" id="CHEBI:33019"/>
        <dbReference type="ChEBI" id="CHEBI:78442"/>
        <dbReference type="ChEBI" id="CHEBI:78520"/>
        <dbReference type="ChEBI" id="CHEBI:456215"/>
        <dbReference type="EC" id="6.1.1.17"/>
    </reaction>
</comment>
<comment type="subunit">
    <text evidence="1">Monomer.</text>
</comment>
<comment type="subcellular location">
    <subcellularLocation>
        <location evidence="1">Cytoplasm</location>
    </subcellularLocation>
</comment>
<comment type="similarity">
    <text evidence="1">Belongs to the class-I aminoacyl-tRNA synthetase family. Glutamate--tRNA ligase type 1 subfamily.</text>
</comment>
<comment type="sequence caution" evidence="2">
    <conflict type="erroneous initiation">
        <sequence resource="EMBL-CDS" id="AAP07190"/>
    </conflict>
</comment>
<reference key="1">
    <citation type="journal article" date="2003" name="Nature">
        <title>Genome sequence of Bacillus cereus and comparative analysis with Bacillus anthracis.</title>
        <authorList>
            <person name="Ivanova N."/>
            <person name="Sorokin A."/>
            <person name="Anderson I."/>
            <person name="Galleron N."/>
            <person name="Candelon B."/>
            <person name="Kapatral V."/>
            <person name="Bhattacharyya A."/>
            <person name="Reznik G."/>
            <person name="Mikhailova N."/>
            <person name="Lapidus A."/>
            <person name="Chu L."/>
            <person name="Mazur M."/>
            <person name="Goltsman E."/>
            <person name="Larsen N."/>
            <person name="D'Souza M."/>
            <person name="Walunas T."/>
            <person name="Grechkin Y."/>
            <person name="Pusch G."/>
            <person name="Haselkorn R."/>
            <person name="Fonstein M."/>
            <person name="Ehrlich S.D."/>
            <person name="Overbeek R."/>
            <person name="Kyrpides N.C."/>
        </authorList>
    </citation>
    <scope>NUCLEOTIDE SEQUENCE [LARGE SCALE GENOMIC DNA]</scope>
    <source>
        <strain>ATCC 14579 / DSM 31 / CCUG 7414 / JCM 2152 / NBRC 15305 / NCIMB 9373 / NCTC 2599 / NRRL B-3711</strain>
    </source>
</reference>
<keyword id="KW-0030">Aminoacyl-tRNA synthetase</keyword>
<keyword id="KW-0067">ATP-binding</keyword>
<keyword id="KW-0963">Cytoplasm</keyword>
<keyword id="KW-0436">Ligase</keyword>
<keyword id="KW-0547">Nucleotide-binding</keyword>
<keyword id="KW-0648">Protein biosynthesis</keyword>
<keyword id="KW-1185">Reference proteome</keyword>
<proteinExistence type="inferred from homology"/>
<accession>Q81J61</accession>
<sequence>MEKQVRVRYAPSPTGHLHIGNARTALFNYLFARHLDGKFIIRIEDTDVKRNVAGGEESQLKYLKWLGMDWDEGVDVGGEFGPYRQTERLDIYKKLYEDLLERGLAYKCYMTEEELEAEREGQIARGETPRYACNHRELTEEQVKEFEAEGRIPSIRFRVPANRDYTFKDIVKDEVAFHSNDFGDFVIVKKDGIPTYNFAVAVDDHLMEITHVLRGDDHISNTPKQMMIYEAFGWDIPQFGHMTLIVNESRKKLSKRDESIIQFIEQYKELGYLPEAIFNFIALLGWSPVGEEEIFSKDEFIKMFDAARLSKSPALFDSQKLKWMNNQYMKKQDLDTVVELSLPHLVKAGRVGETLSEQDQAWIRDVIALYHEQMSFGAEIVELSEMFFKDHVDYEEEGQEVLNGEQVPEVLRAFAGQIEALEVMEPAAIKAAIKAVQKETGHKGKNLFMPIRVATTGQTHGPELPNAIALLGKEKVLNRLQKVIG</sequence>
<protein>
    <recommendedName>
        <fullName evidence="1">Glutamate--tRNA ligase</fullName>
        <ecNumber evidence="1">6.1.1.17</ecNumber>
    </recommendedName>
    <alternativeName>
        <fullName evidence="1">Glutamyl-tRNA synthetase</fullName>
        <shortName evidence="1">GluRS</shortName>
    </alternativeName>
</protein>
<organism>
    <name type="scientific">Bacillus cereus (strain ATCC 14579 / DSM 31 / CCUG 7414 / JCM 2152 / NBRC 15305 / NCIMB 9373 / NCTC 2599 / NRRL B-3711)</name>
    <dbReference type="NCBI Taxonomy" id="226900"/>
    <lineage>
        <taxon>Bacteria</taxon>
        <taxon>Bacillati</taxon>
        <taxon>Bacillota</taxon>
        <taxon>Bacilli</taxon>
        <taxon>Bacillales</taxon>
        <taxon>Bacillaceae</taxon>
        <taxon>Bacillus</taxon>
        <taxon>Bacillus cereus group</taxon>
    </lineage>
</organism>
<dbReference type="EC" id="6.1.1.17" evidence="1"/>
<dbReference type="EMBL" id="AE016877">
    <property type="protein sequence ID" value="AAP07190.1"/>
    <property type="status" value="ALT_INIT"/>
    <property type="molecule type" value="Genomic_DNA"/>
</dbReference>
<dbReference type="RefSeq" id="NP_829989.1">
    <property type="nucleotide sequence ID" value="NC_004722.1"/>
</dbReference>
<dbReference type="RefSeq" id="WP_000415140.1">
    <property type="nucleotide sequence ID" value="NC_004722.1"/>
</dbReference>
<dbReference type="SMR" id="Q81J61"/>
<dbReference type="STRING" id="226900.BC_0108"/>
<dbReference type="KEGG" id="bce:BC0108"/>
<dbReference type="PATRIC" id="fig|226900.8.peg.110"/>
<dbReference type="HOGENOM" id="CLU_015768_6_1_9"/>
<dbReference type="Proteomes" id="UP000001417">
    <property type="component" value="Chromosome"/>
</dbReference>
<dbReference type="GO" id="GO:0005829">
    <property type="term" value="C:cytosol"/>
    <property type="evidence" value="ECO:0000318"/>
    <property type="project" value="GO_Central"/>
</dbReference>
<dbReference type="GO" id="GO:0005524">
    <property type="term" value="F:ATP binding"/>
    <property type="evidence" value="ECO:0007669"/>
    <property type="project" value="UniProtKB-UniRule"/>
</dbReference>
<dbReference type="GO" id="GO:0004818">
    <property type="term" value="F:glutamate-tRNA ligase activity"/>
    <property type="evidence" value="ECO:0000318"/>
    <property type="project" value="GO_Central"/>
</dbReference>
<dbReference type="GO" id="GO:0000049">
    <property type="term" value="F:tRNA binding"/>
    <property type="evidence" value="ECO:0007669"/>
    <property type="project" value="InterPro"/>
</dbReference>
<dbReference type="GO" id="GO:0008270">
    <property type="term" value="F:zinc ion binding"/>
    <property type="evidence" value="ECO:0007669"/>
    <property type="project" value="InterPro"/>
</dbReference>
<dbReference type="GO" id="GO:0006424">
    <property type="term" value="P:glutamyl-tRNA aminoacylation"/>
    <property type="evidence" value="ECO:0000318"/>
    <property type="project" value="GO_Central"/>
</dbReference>
<dbReference type="CDD" id="cd00808">
    <property type="entry name" value="GluRS_core"/>
    <property type="match status" value="1"/>
</dbReference>
<dbReference type="FunFam" id="1.10.10.350:FF:000002">
    <property type="entry name" value="Glutamate--tRNA ligase"/>
    <property type="match status" value="1"/>
</dbReference>
<dbReference type="FunFam" id="3.40.50.620:FF:000007">
    <property type="entry name" value="Glutamate--tRNA ligase"/>
    <property type="match status" value="1"/>
</dbReference>
<dbReference type="Gene3D" id="1.10.10.350">
    <property type="match status" value="1"/>
</dbReference>
<dbReference type="Gene3D" id="3.40.50.620">
    <property type="entry name" value="HUPs"/>
    <property type="match status" value="1"/>
</dbReference>
<dbReference type="HAMAP" id="MF_00022">
    <property type="entry name" value="Glu_tRNA_synth_type1"/>
    <property type="match status" value="1"/>
</dbReference>
<dbReference type="InterPro" id="IPR045462">
    <property type="entry name" value="aa-tRNA-synth_I_cd-bd"/>
</dbReference>
<dbReference type="InterPro" id="IPR020751">
    <property type="entry name" value="aa-tRNA-synth_I_codon-bd_sub2"/>
</dbReference>
<dbReference type="InterPro" id="IPR001412">
    <property type="entry name" value="aa-tRNA-synth_I_CS"/>
</dbReference>
<dbReference type="InterPro" id="IPR008925">
    <property type="entry name" value="aa_tRNA-synth_I_cd-bd_sf"/>
</dbReference>
<dbReference type="InterPro" id="IPR004527">
    <property type="entry name" value="Glu-tRNA-ligase_bac/mito"/>
</dbReference>
<dbReference type="InterPro" id="IPR000924">
    <property type="entry name" value="Glu/Gln-tRNA-synth"/>
</dbReference>
<dbReference type="InterPro" id="IPR020058">
    <property type="entry name" value="Glu/Gln-tRNA-synth_Ib_cat-dom"/>
</dbReference>
<dbReference type="InterPro" id="IPR049940">
    <property type="entry name" value="GluQ/Sye"/>
</dbReference>
<dbReference type="InterPro" id="IPR033910">
    <property type="entry name" value="GluRS_core"/>
</dbReference>
<dbReference type="InterPro" id="IPR014729">
    <property type="entry name" value="Rossmann-like_a/b/a_fold"/>
</dbReference>
<dbReference type="NCBIfam" id="TIGR00464">
    <property type="entry name" value="gltX_bact"/>
    <property type="match status" value="1"/>
</dbReference>
<dbReference type="PANTHER" id="PTHR43311">
    <property type="entry name" value="GLUTAMATE--TRNA LIGASE"/>
    <property type="match status" value="1"/>
</dbReference>
<dbReference type="PANTHER" id="PTHR43311:SF2">
    <property type="entry name" value="GLUTAMATE--TRNA LIGASE, MITOCHONDRIAL-RELATED"/>
    <property type="match status" value="1"/>
</dbReference>
<dbReference type="Pfam" id="PF19269">
    <property type="entry name" value="Anticodon_2"/>
    <property type="match status" value="1"/>
</dbReference>
<dbReference type="Pfam" id="PF00749">
    <property type="entry name" value="tRNA-synt_1c"/>
    <property type="match status" value="1"/>
</dbReference>
<dbReference type="PRINTS" id="PR00987">
    <property type="entry name" value="TRNASYNTHGLU"/>
</dbReference>
<dbReference type="SUPFAM" id="SSF48163">
    <property type="entry name" value="An anticodon-binding domain of class I aminoacyl-tRNA synthetases"/>
    <property type="match status" value="1"/>
</dbReference>
<dbReference type="SUPFAM" id="SSF52374">
    <property type="entry name" value="Nucleotidylyl transferase"/>
    <property type="match status" value="1"/>
</dbReference>
<dbReference type="PROSITE" id="PS00178">
    <property type="entry name" value="AA_TRNA_LIGASE_I"/>
    <property type="match status" value="1"/>
</dbReference>
<name>SYE_BACCR</name>
<gene>
    <name evidence="1" type="primary">gltX</name>
    <name type="ordered locus">BC_0108</name>
</gene>
<feature type="chain" id="PRO_0000119500" description="Glutamate--tRNA ligase">
    <location>
        <begin position="1"/>
        <end position="485"/>
    </location>
</feature>
<feature type="short sequence motif" description="'HIGH' region" evidence="1">
    <location>
        <begin position="11"/>
        <end position="21"/>
    </location>
</feature>
<feature type="short sequence motif" description="'KMSKS' region" evidence="1">
    <location>
        <begin position="252"/>
        <end position="256"/>
    </location>
</feature>
<feature type="binding site" evidence="1">
    <location>
        <position position="255"/>
    </location>
    <ligand>
        <name>ATP</name>
        <dbReference type="ChEBI" id="CHEBI:30616"/>
    </ligand>
</feature>
<evidence type="ECO:0000255" key="1">
    <source>
        <dbReference type="HAMAP-Rule" id="MF_00022"/>
    </source>
</evidence>
<evidence type="ECO:0000305" key="2"/>